<accession>Q4UL27</accession>
<protein>
    <recommendedName>
        <fullName>Putative response regulator NtrX-like</fullName>
    </recommendedName>
</protein>
<sequence length="475" mass="53782">MSQLDVLIVDDEESIRNLIAANLKDEGFNPKVAANSTQALKILSEKPVSAVILDIWLQGSEIDGLGILEIIKKRYPLMPVIIISGHGTIETAVNAIKMGAYDYIEKPFNNDKLVILLKRACEVTKLKRENIDLKSKVIDKTELVGGCSVTLKYKMEIEKAASSSSRIMIHGKVGSGKELAARLIHKQSKRVNNPFIIFSPTCMTTEKINQELFGESEKQENNTKRPTILEFANNGTLYIDEVSNIPIPIQVKLLKFLKDQTITKPCGKNIKVDIKIITGTSKNIQDEVNNGKFLEDLYYRLNVSSLKVPSLYERKEDIPLLVKYFVKQLSKFSGLKERNFADETIAALQSYEWPGNIRQLRNVVEWTLIMNPLTTGNNEIIKPYMIPSEILANSANLTKLEDSFDMLSMPLREAREVFERQYLSAQMSRFNNNISKTSSFVGMERSALHRKLKLLSLHIPPTNRINEEEYEEANA</sequence>
<name>NTRXL_RICFE</name>
<gene>
    <name type="ordered locus">RF_0895</name>
</gene>
<proteinExistence type="inferred from homology"/>
<keyword id="KW-0067">ATP-binding</keyword>
<keyword id="KW-0547">Nucleotide-binding</keyword>
<keyword id="KW-0597">Phosphoprotein</keyword>
<keyword id="KW-0804">Transcription</keyword>
<keyword id="KW-0805">Transcription regulation</keyword>
<keyword id="KW-0902">Two-component regulatory system</keyword>
<evidence type="ECO:0000250" key="1"/>
<evidence type="ECO:0000255" key="2">
    <source>
        <dbReference type="PROSITE-ProRule" id="PRU00169"/>
    </source>
</evidence>
<evidence type="ECO:0000255" key="3">
    <source>
        <dbReference type="PROSITE-ProRule" id="PRU00193"/>
    </source>
</evidence>
<comment type="function">
    <text evidence="1">Member of the two-component regulatory system RF_0895/RF_0427.</text>
</comment>
<reference key="1">
    <citation type="journal article" date="2005" name="PLoS Biol.">
        <title>The genome sequence of Rickettsia felis identifies the first putative conjugative plasmid in an obligate intracellular parasite.</title>
        <authorList>
            <person name="Ogata H."/>
            <person name="Renesto P."/>
            <person name="Audic S."/>
            <person name="Robert C."/>
            <person name="Blanc G."/>
            <person name="Fournier P.-E."/>
            <person name="Parinello H."/>
            <person name="Claverie J.-M."/>
            <person name="Raoult D."/>
        </authorList>
    </citation>
    <scope>NUCLEOTIDE SEQUENCE [LARGE SCALE GENOMIC DNA]</scope>
    <source>
        <strain>ATCC VR-1525 / URRWXCal2</strain>
    </source>
</reference>
<feature type="chain" id="PRO_0000282383" description="Putative response regulator NtrX-like">
    <location>
        <begin position="1"/>
        <end position="475"/>
    </location>
</feature>
<feature type="domain" description="Response regulatory" evidence="2">
    <location>
        <begin position="5"/>
        <end position="121"/>
    </location>
</feature>
<feature type="domain" description="Sigma-54 factor interaction" evidence="3">
    <location>
        <begin position="143"/>
        <end position="369"/>
    </location>
</feature>
<feature type="binding site" evidence="3">
    <location>
        <begin position="171"/>
        <end position="178"/>
    </location>
    <ligand>
        <name>ATP</name>
        <dbReference type="ChEBI" id="CHEBI:30616"/>
    </ligand>
</feature>
<feature type="binding site" evidence="3">
    <location>
        <begin position="232"/>
        <end position="241"/>
    </location>
    <ligand>
        <name>ATP</name>
        <dbReference type="ChEBI" id="CHEBI:30616"/>
    </ligand>
</feature>
<feature type="modified residue" description="4-aspartylphosphate" evidence="2">
    <location>
        <position position="54"/>
    </location>
</feature>
<dbReference type="EMBL" id="CP000053">
    <property type="protein sequence ID" value="AAY61746.1"/>
    <property type="molecule type" value="Genomic_DNA"/>
</dbReference>
<dbReference type="SMR" id="Q4UL27"/>
<dbReference type="STRING" id="315456.RF_0895"/>
<dbReference type="KEGG" id="rfe:RF_0895"/>
<dbReference type="eggNOG" id="COG2204">
    <property type="taxonomic scope" value="Bacteria"/>
</dbReference>
<dbReference type="HOGENOM" id="CLU_000445_0_6_5"/>
<dbReference type="OrthoDB" id="9802388at2"/>
<dbReference type="Proteomes" id="UP000008548">
    <property type="component" value="Chromosome"/>
</dbReference>
<dbReference type="GO" id="GO:0005524">
    <property type="term" value="F:ATP binding"/>
    <property type="evidence" value="ECO:0007669"/>
    <property type="project" value="UniProtKB-KW"/>
</dbReference>
<dbReference type="GO" id="GO:0043565">
    <property type="term" value="F:sequence-specific DNA binding"/>
    <property type="evidence" value="ECO:0007669"/>
    <property type="project" value="InterPro"/>
</dbReference>
<dbReference type="GO" id="GO:0000160">
    <property type="term" value="P:phosphorelay signal transduction system"/>
    <property type="evidence" value="ECO:0007669"/>
    <property type="project" value="UniProtKB-KW"/>
</dbReference>
<dbReference type="GO" id="GO:0006355">
    <property type="term" value="P:regulation of DNA-templated transcription"/>
    <property type="evidence" value="ECO:0007669"/>
    <property type="project" value="InterPro"/>
</dbReference>
<dbReference type="CDD" id="cd00009">
    <property type="entry name" value="AAA"/>
    <property type="match status" value="1"/>
</dbReference>
<dbReference type="CDD" id="cd17550">
    <property type="entry name" value="REC_NtrX-like"/>
    <property type="match status" value="1"/>
</dbReference>
<dbReference type="FunFam" id="3.40.50.2300:FF:000018">
    <property type="entry name" value="DNA-binding transcriptional regulator NtrC"/>
    <property type="match status" value="1"/>
</dbReference>
<dbReference type="Gene3D" id="1.10.8.60">
    <property type="match status" value="1"/>
</dbReference>
<dbReference type="Gene3D" id="3.40.50.2300">
    <property type="match status" value="1"/>
</dbReference>
<dbReference type="Gene3D" id="1.10.10.60">
    <property type="entry name" value="Homeodomain-like"/>
    <property type="match status" value="1"/>
</dbReference>
<dbReference type="Gene3D" id="3.40.50.300">
    <property type="entry name" value="P-loop containing nucleotide triphosphate hydrolases"/>
    <property type="match status" value="1"/>
</dbReference>
<dbReference type="InterPro" id="IPR011006">
    <property type="entry name" value="CheY-like_superfamily"/>
</dbReference>
<dbReference type="InterPro" id="IPR009057">
    <property type="entry name" value="Homeodomain-like_sf"/>
</dbReference>
<dbReference type="InterPro" id="IPR002197">
    <property type="entry name" value="HTH_Fis"/>
</dbReference>
<dbReference type="InterPro" id="IPR027417">
    <property type="entry name" value="P-loop_NTPase"/>
</dbReference>
<dbReference type="InterPro" id="IPR001789">
    <property type="entry name" value="Sig_transdc_resp-reg_receiver"/>
</dbReference>
<dbReference type="InterPro" id="IPR002078">
    <property type="entry name" value="Sigma_54_int"/>
</dbReference>
<dbReference type="InterPro" id="IPR025944">
    <property type="entry name" value="Sigma_54_int_dom_CS"/>
</dbReference>
<dbReference type="PANTHER" id="PTHR32071:SF17">
    <property type="entry name" value="TRANSCRIPTIONAL REGULATOR (NTRC FAMILY)"/>
    <property type="match status" value="1"/>
</dbReference>
<dbReference type="PANTHER" id="PTHR32071">
    <property type="entry name" value="TRANSCRIPTIONAL REGULATORY PROTEIN"/>
    <property type="match status" value="1"/>
</dbReference>
<dbReference type="Pfam" id="PF02954">
    <property type="entry name" value="HTH_8"/>
    <property type="match status" value="1"/>
</dbReference>
<dbReference type="Pfam" id="PF00072">
    <property type="entry name" value="Response_reg"/>
    <property type="match status" value="1"/>
</dbReference>
<dbReference type="Pfam" id="PF00158">
    <property type="entry name" value="Sigma54_activat"/>
    <property type="match status" value="1"/>
</dbReference>
<dbReference type="SMART" id="SM00448">
    <property type="entry name" value="REC"/>
    <property type="match status" value="1"/>
</dbReference>
<dbReference type="SUPFAM" id="SSF52172">
    <property type="entry name" value="CheY-like"/>
    <property type="match status" value="1"/>
</dbReference>
<dbReference type="SUPFAM" id="SSF46689">
    <property type="entry name" value="Homeodomain-like"/>
    <property type="match status" value="1"/>
</dbReference>
<dbReference type="SUPFAM" id="SSF52540">
    <property type="entry name" value="P-loop containing nucleoside triphosphate hydrolases"/>
    <property type="match status" value="1"/>
</dbReference>
<dbReference type="PROSITE" id="PS50110">
    <property type="entry name" value="RESPONSE_REGULATORY"/>
    <property type="match status" value="1"/>
</dbReference>
<dbReference type="PROSITE" id="PS00688">
    <property type="entry name" value="SIGMA54_INTERACT_3"/>
    <property type="match status" value="1"/>
</dbReference>
<dbReference type="PROSITE" id="PS50045">
    <property type="entry name" value="SIGMA54_INTERACT_4"/>
    <property type="match status" value="1"/>
</dbReference>
<organism>
    <name type="scientific">Rickettsia felis (strain ATCC VR-1525 / URRWXCal2)</name>
    <name type="common">Rickettsia azadi</name>
    <dbReference type="NCBI Taxonomy" id="315456"/>
    <lineage>
        <taxon>Bacteria</taxon>
        <taxon>Pseudomonadati</taxon>
        <taxon>Pseudomonadota</taxon>
        <taxon>Alphaproteobacteria</taxon>
        <taxon>Rickettsiales</taxon>
        <taxon>Rickettsiaceae</taxon>
        <taxon>Rickettsieae</taxon>
        <taxon>Rickettsia</taxon>
        <taxon>spotted fever group</taxon>
    </lineage>
</organism>